<reference key="1">
    <citation type="submission" date="2005-03" db="EMBL/GenBank/DDBJ databases">
        <title>Brevibacillus brevis strain 47, complete genome.</title>
        <authorList>
            <person name="Hosoyama A."/>
            <person name="Yamada R."/>
            <person name="Hongo Y."/>
            <person name="Terui Y."/>
            <person name="Ankai A."/>
            <person name="Masuyama W."/>
            <person name="Sekiguchi M."/>
            <person name="Takeda T."/>
            <person name="Asano K."/>
            <person name="Ohji S."/>
            <person name="Ichikawa N."/>
            <person name="Narita S."/>
            <person name="Aoki N."/>
            <person name="Miura H."/>
            <person name="Matsushita S."/>
            <person name="Sekigawa T."/>
            <person name="Yamagata H."/>
            <person name="Yoshikawa H."/>
            <person name="Udaka S."/>
            <person name="Tanikawa S."/>
            <person name="Fujita N."/>
        </authorList>
    </citation>
    <scope>NUCLEOTIDE SEQUENCE [LARGE SCALE GENOMIC DNA]</scope>
    <source>
        <strain>47 / JCM 6285 / NBRC 100599</strain>
    </source>
</reference>
<comment type="function">
    <text evidence="1">Peptide chain release factor 1 directs the termination of translation in response to the peptide chain termination codons UAG and UAA.</text>
</comment>
<comment type="subcellular location">
    <subcellularLocation>
        <location evidence="1">Cytoplasm</location>
    </subcellularLocation>
</comment>
<comment type="PTM">
    <text evidence="1">Methylated by PrmC. Methylation increases the termination efficiency of RF1.</text>
</comment>
<comment type="similarity">
    <text evidence="1">Belongs to the prokaryotic/mitochondrial release factor family.</text>
</comment>
<sequence>MFTRLSAVEERFEEVTNLLCDPDVISDTKRLRELSKEQSSLEETVTTYREYKSVVSQIDDAKAMLEEKLDDEMREMVKLELNELSARKEQLEDRLKILLLPKDPNDEKNVIVEIRGAAGGDEAALFAAVLFRMYTRFAERNAFKIEVLEASPTDIGGYKEIVFSLSGRGAYSKMKFESGAHRVQRIPATESGGRIHTSTATVLVLPEAEDVEVEVHEKDIRIDTFCSSGAGGQSVNTTKSAVRVTHIPTGIMVSCQDEKSQHSNKDKALRVLRARLYDFYMQQQNAEADATRKSLVGTGDRSERIRTYNYPQSRVTDHRIGLTLHRLESVLEGEMDEVIDNLIMHEQTELLKSHAHSA</sequence>
<name>RF1_BREBN</name>
<feature type="chain" id="PRO_1000193474" description="Peptide chain release factor 1">
    <location>
        <begin position="1"/>
        <end position="358"/>
    </location>
</feature>
<feature type="modified residue" description="N5-methylglutamine" evidence="1">
    <location>
        <position position="233"/>
    </location>
</feature>
<keyword id="KW-0963">Cytoplasm</keyword>
<keyword id="KW-0488">Methylation</keyword>
<keyword id="KW-0648">Protein biosynthesis</keyword>
<keyword id="KW-1185">Reference proteome</keyword>
<protein>
    <recommendedName>
        <fullName evidence="1">Peptide chain release factor 1</fullName>
        <shortName evidence="1">RF-1</shortName>
    </recommendedName>
</protein>
<accession>C0Z828</accession>
<proteinExistence type="inferred from homology"/>
<gene>
    <name evidence="1" type="primary">prfA</name>
    <name type="ordered locus">BBR47_54780</name>
</gene>
<dbReference type="EMBL" id="AP008955">
    <property type="protein sequence ID" value="BAH46455.1"/>
    <property type="molecule type" value="Genomic_DNA"/>
</dbReference>
<dbReference type="RefSeq" id="WP_015893647.1">
    <property type="nucleotide sequence ID" value="NC_012491.1"/>
</dbReference>
<dbReference type="SMR" id="C0Z828"/>
<dbReference type="STRING" id="358681.BBR47_54780"/>
<dbReference type="KEGG" id="bbe:BBR47_54780"/>
<dbReference type="eggNOG" id="COG0216">
    <property type="taxonomic scope" value="Bacteria"/>
</dbReference>
<dbReference type="HOGENOM" id="CLU_036856_0_1_9"/>
<dbReference type="Proteomes" id="UP000001877">
    <property type="component" value="Chromosome"/>
</dbReference>
<dbReference type="GO" id="GO:0005737">
    <property type="term" value="C:cytoplasm"/>
    <property type="evidence" value="ECO:0007669"/>
    <property type="project" value="UniProtKB-SubCell"/>
</dbReference>
<dbReference type="GO" id="GO:0016149">
    <property type="term" value="F:translation release factor activity, codon specific"/>
    <property type="evidence" value="ECO:0007669"/>
    <property type="project" value="UniProtKB-UniRule"/>
</dbReference>
<dbReference type="FunFam" id="3.30.160.20:FF:000004">
    <property type="entry name" value="Peptide chain release factor 1"/>
    <property type="match status" value="1"/>
</dbReference>
<dbReference type="FunFam" id="3.30.70.1660:FF:000002">
    <property type="entry name" value="Peptide chain release factor 1"/>
    <property type="match status" value="1"/>
</dbReference>
<dbReference type="FunFam" id="3.30.70.1660:FF:000004">
    <property type="entry name" value="Peptide chain release factor 1"/>
    <property type="match status" value="1"/>
</dbReference>
<dbReference type="Gene3D" id="3.30.160.20">
    <property type="match status" value="1"/>
</dbReference>
<dbReference type="Gene3D" id="3.30.70.1660">
    <property type="match status" value="1"/>
</dbReference>
<dbReference type="Gene3D" id="6.10.140.1950">
    <property type="match status" value="1"/>
</dbReference>
<dbReference type="HAMAP" id="MF_00093">
    <property type="entry name" value="Rel_fac_1"/>
    <property type="match status" value="1"/>
</dbReference>
<dbReference type="InterPro" id="IPR005139">
    <property type="entry name" value="PCRF"/>
</dbReference>
<dbReference type="InterPro" id="IPR000352">
    <property type="entry name" value="Pep_chain_release_fac_I"/>
</dbReference>
<dbReference type="InterPro" id="IPR045853">
    <property type="entry name" value="Pep_chain_release_fac_I_sf"/>
</dbReference>
<dbReference type="InterPro" id="IPR050057">
    <property type="entry name" value="Prokaryotic/Mito_RF"/>
</dbReference>
<dbReference type="InterPro" id="IPR004373">
    <property type="entry name" value="RF-1"/>
</dbReference>
<dbReference type="NCBIfam" id="TIGR00019">
    <property type="entry name" value="prfA"/>
    <property type="match status" value="1"/>
</dbReference>
<dbReference type="NCBIfam" id="NF001859">
    <property type="entry name" value="PRK00591.1"/>
    <property type="match status" value="1"/>
</dbReference>
<dbReference type="PANTHER" id="PTHR43804">
    <property type="entry name" value="LD18447P"/>
    <property type="match status" value="1"/>
</dbReference>
<dbReference type="PANTHER" id="PTHR43804:SF7">
    <property type="entry name" value="LD18447P"/>
    <property type="match status" value="1"/>
</dbReference>
<dbReference type="Pfam" id="PF03462">
    <property type="entry name" value="PCRF"/>
    <property type="match status" value="1"/>
</dbReference>
<dbReference type="Pfam" id="PF00472">
    <property type="entry name" value="RF-1"/>
    <property type="match status" value="1"/>
</dbReference>
<dbReference type="SMART" id="SM00937">
    <property type="entry name" value="PCRF"/>
    <property type="match status" value="1"/>
</dbReference>
<dbReference type="SUPFAM" id="SSF75620">
    <property type="entry name" value="Release factor"/>
    <property type="match status" value="1"/>
</dbReference>
<organism>
    <name type="scientific">Brevibacillus brevis (strain 47 / JCM 6285 / NBRC 100599)</name>
    <dbReference type="NCBI Taxonomy" id="358681"/>
    <lineage>
        <taxon>Bacteria</taxon>
        <taxon>Bacillati</taxon>
        <taxon>Bacillota</taxon>
        <taxon>Bacilli</taxon>
        <taxon>Bacillales</taxon>
        <taxon>Paenibacillaceae</taxon>
        <taxon>Brevibacillus</taxon>
    </lineage>
</organism>
<evidence type="ECO:0000255" key="1">
    <source>
        <dbReference type="HAMAP-Rule" id="MF_00093"/>
    </source>
</evidence>